<gene>
    <name type="primary">Cyp310a1</name>
    <name type="ORF">CG10391</name>
</gene>
<evidence type="ECO:0000250" key="1"/>
<evidence type="ECO:0000305" key="2"/>
<dbReference type="EC" id="1.14.-.-"/>
<dbReference type="EMBL" id="AE014134">
    <property type="protein sequence ID" value="AAF53683.1"/>
    <property type="molecule type" value="Genomic_DNA"/>
</dbReference>
<dbReference type="EMBL" id="AY069667">
    <property type="protein sequence ID" value="AAL39812.1"/>
    <property type="molecule type" value="mRNA"/>
</dbReference>
<dbReference type="RefSeq" id="NP_609891.1">
    <property type="nucleotide sequence ID" value="NM_136047.4"/>
</dbReference>
<dbReference type="SMR" id="Q9VJ71"/>
<dbReference type="BioGRID" id="61110">
    <property type="interactions" value="3"/>
</dbReference>
<dbReference type="FunCoup" id="Q9VJ71">
    <property type="interactions" value="1"/>
</dbReference>
<dbReference type="IntAct" id="Q9VJ71">
    <property type="interactions" value="2"/>
</dbReference>
<dbReference type="STRING" id="7227.FBpp0080627"/>
<dbReference type="PaxDb" id="7227-FBpp0080627"/>
<dbReference type="DNASU" id="35115"/>
<dbReference type="EnsemblMetazoa" id="FBtr0081077">
    <property type="protein sequence ID" value="FBpp0080627"/>
    <property type="gene ID" value="FBgn0032693"/>
</dbReference>
<dbReference type="GeneID" id="35115"/>
<dbReference type="KEGG" id="dme:Dmel_CG10391"/>
<dbReference type="UCSC" id="CG10391-RA">
    <property type="organism name" value="d. melanogaster"/>
</dbReference>
<dbReference type="AGR" id="FB:FBgn0032693"/>
<dbReference type="CTD" id="35115"/>
<dbReference type="FlyBase" id="FBgn0032693">
    <property type="gene designation" value="Cyp310a1"/>
</dbReference>
<dbReference type="VEuPathDB" id="VectorBase:FBgn0032693"/>
<dbReference type="eggNOG" id="KOG0158">
    <property type="taxonomic scope" value="Eukaryota"/>
</dbReference>
<dbReference type="GeneTree" id="ENSGT00940000168877"/>
<dbReference type="HOGENOM" id="CLU_001570_5_2_1"/>
<dbReference type="InParanoid" id="Q9VJ71"/>
<dbReference type="OMA" id="PAPFIHT"/>
<dbReference type="OrthoDB" id="1055148at2759"/>
<dbReference type="PhylomeDB" id="Q9VJ71"/>
<dbReference type="BioGRID-ORCS" id="35115">
    <property type="hits" value="0 hits in 1 CRISPR screen"/>
</dbReference>
<dbReference type="GenomeRNAi" id="35115"/>
<dbReference type="PRO" id="PR:Q9VJ71"/>
<dbReference type="Proteomes" id="UP000000803">
    <property type="component" value="Chromosome 2L"/>
</dbReference>
<dbReference type="Bgee" id="FBgn0032693">
    <property type="expression patterns" value="Expressed in head mesoderm anlage (Drosophila) and 45 other cell types or tissues"/>
</dbReference>
<dbReference type="GO" id="GO:0005789">
    <property type="term" value="C:endoplasmic reticulum membrane"/>
    <property type="evidence" value="ECO:0007669"/>
    <property type="project" value="UniProtKB-SubCell"/>
</dbReference>
<dbReference type="GO" id="GO:0020037">
    <property type="term" value="F:heme binding"/>
    <property type="evidence" value="ECO:0007669"/>
    <property type="project" value="InterPro"/>
</dbReference>
<dbReference type="GO" id="GO:0005506">
    <property type="term" value="F:iron ion binding"/>
    <property type="evidence" value="ECO:0007669"/>
    <property type="project" value="InterPro"/>
</dbReference>
<dbReference type="GO" id="GO:0004497">
    <property type="term" value="F:monooxygenase activity"/>
    <property type="evidence" value="ECO:0007669"/>
    <property type="project" value="UniProtKB-KW"/>
</dbReference>
<dbReference type="GO" id="GO:0016705">
    <property type="term" value="F:oxidoreductase activity, acting on paired donors, with incorporation or reduction of molecular oxygen"/>
    <property type="evidence" value="ECO:0007669"/>
    <property type="project" value="InterPro"/>
</dbReference>
<dbReference type="CDD" id="cd11056">
    <property type="entry name" value="CYP6-like"/>
    <property type="match status" value="1"/>
</dbReference>
<dbReference type="Gene3D" id="1.10.630.10">
    <property type="entry name" value="Cytochrome P450"/>
    <property type="match status" value="1"/>
</dbReference>
<dbReference type="InterPro" id="IPR001128">
    <property type="entry name" value="Cyt_P450"/>
</dbReference>
<dbReference type="InterPro" id="IPR002401">
    <property type="entry name" value="Cyt_P450_E_grp-I"/>
</dbReference>
<dbReference type="InterPro" id="IPR036396">
    <property type="entry name" value="Cyt_P450_sf"/>
</dbReference>
<dbReference type="InterPro" id="IPR050476">
    <property type="entry name" value="Insect_CytP450_Detox"/>
</dbReference>
<dbReference type="PANTHER" id="PTHR24292">
    <property type="entry name" value="CYTOCHROME P450"/>
    <property type="match status" value="1"/>
</dbReference>
<dbReference type="PANTHER" id="PTHR24292:SF93">
    <property type="entry name" value="CYTOCHROME P450 310A1-RELATED"/>
    <property type="match status" value="1"/>
</dbReference>
<dbReference type="Pfam" id="PF00067">
    <property type="entry name" value="p450"/>
    <property type="match status" value="1"/>
</dbReference>
<dbReference type="PRINTS" id="PR00463">
    <property type="entry name" value="EP450I"/>
</dbReference>
<dbReference type="PRINTS" id="PR00385">
    <property type="entry name" value="P450"/>
</dbReference>
<dbReference type="SUPFAM" id="SSF48264">
    <property type="entry name" value="Cytochrome P450"/>
    <property type="match status" value="1"/>
</dbReference>
<keyword id="KW-0256">Endoplasmic reticulum</keyword>
<keyword id="KW-0349">Heme</keyword>
<keyword id="KW-0408">Iron</keyword>
<keyword id="KW-0472">Membrane</keyword>
<keyword id="KW-0479">Metal-binding</keyword>
<keyword id="KW-0492">Microsome</keyword>
<keyword id="KW-0503">Monooxygenase</keyword>
<keyword id="KW-0560">Oxidoreductase</keyword>
<keyword id="KW-1185">Reference proteome</keyword>
<proteinExistence type="evidence at transcript level"/>
<name>CP310_DROME</name>
<accession>Q9VJ71</accession>
<reference key="1">
    <citation type="journal article" date="2000" name="Science">
        <title>The genome sequence of Drosophila melanogaster.</title>
        <authorList>
            <person name="Adams M.D."/>
            <person name="Celniker S.E."/>
            <person name="Holt R.A."/>
            <person name="Evans C.A."/>
            <person name="Gocayne J.D."/>
            <person name="Amanatides P.G."/>
            <person name="Scherer S.E."/>
            <person name="Li P.W."/>
            <person name="Hoskins R.A."/>
            <person name="Galle R.F."/>
            <person name="George R.A."/>
            <person name="Lewis S.E."/>
            <person name="Richards S."/>
            <person name="Ashburner M."/>
            <person name="Henderson S.N."/>
            <person name="Sutton G.G."/>
            <person name="Wortman J.R."/>
            <person name="Yandell M.D."/>
            <person name="Zhang Q."/>
            <person name="Chen L.X."/>
            <person name="Brandon R.C."/>
            <person name="Rogers Y.-H.C."/>
            <person name="Blazej R.G."/>
            <person name="Champe M."/>
            <person name="Pfeiffer B.D."/>
            <person name="Wan K.H."/>
            <person name="Doyle C."/>
            <person name="Baxter E.G."/>
            <person name="Helt G."/>
            <person name="Nelson C.R."/>
            <person name="Miklos G.L.G."/>
            <person name="Abril J.F."/>
            <person name="Agbayani A."/>
            <person name="An H.-J."/>
            <person name="Andrews-Pfannkoch C."/>
            <person name="Baldwin D."/>
            <person name="Ballew R.M."/>
            <person name="Basu A."/>
            <person name="Baxendale J."/>
            <person name="Bayraktaroglu L."/>
            <person name="Beasley E.M."/>
            <person name="Beeson K.Y."/>
            <person name="Benos P.V."/>
            <person name="Berman B.P."/>
            <person name="Bhandari D."/>
            <person name="Bolshakov S."/>
            <person name="Borkova D."/>
            <person name="Botchan M.R."/>
            <person name="Bouck J."/>
            <person name="Brokstein P."/>
            <person name="Brottier P."/>
            <person name="Burtis K.C."/>
            <person name="Busam D.A."/>
            <person name="Butler H."/>
            <person name="Cadieu E."/>
            <person name="Center A."/>
            <person name="Chandra I."/>
            <person name="Cherry J.M."/>
            <person name="Cawley S."/>
            <person name="Dahlke C."/>
            <person name="Davenport L.B."/>
            <person name="Davies P."/>
            <person name="de Pablos B."/>
            <person name="Delcher A."/>
            <person name="Deng Z."/>
            <person name="Mays A.D."/>
            <person name="Dew I."/>
            <person name="Dietz S.M."/>
            <person name="Dodson K."/>
            <person name="Doup L.E."/>
            <person name="Downes M."/>
            <person name="Dugan-Rocha S."/>
            <person name="Dunkov B.C."/>
            <person name="Dunn P."/>
            <person name="Durbin K.J."/>
            <person name="Evangelista C.C."/>
            <person name="Ferraz C."/>
            <person name="Ferriera S."/>
            <person name="Fleischmann W."/>
            <person name="Fosler C."/>
            <person name="Gabrielian A.E."/>
            <person name="Garg N.S."/>
            <person name="Gelbart W.M."/>
            <person name="Glasser K."/>
            <person name="Glodek A."/>
            <person name="Gong F."/>
            <person name="Gorrell J.H."/>
            <person name="Gu Z."/>
            <person name="Guan P."/>
            <person name="Harris M."/>
            <person name="Harris N.L."/>
            <person name="Harvey D.A."/>
            <person name="Heiman T.J."/>
            <person name="Hernandez J.R."/>
            <person name="Houck J."/>
            <person name="Hostin D."/>
            <person name="Houston K.A."/>
            <person name="Howland T.J."/>
            <person name="Wei M.-H."/>
            <person name="Ibegwam C."/>
            <person name="Jalali M."/>
            <person name="Kalush F."/>
            <person name="Karpen G.H."/>
            <person name="Ke Z."/>
            <person name="Kennison J.A."/>
            <person name="Ketchum K.A."/>
            <person name="Kimmel B.E."/>
            <person name="Kodira C.D."/>
            <person name="Kraft C.L."/>
            <person name="Kravitz S."/>
            <person name="Kulp D."/>
            <person name="Lai Z."/>
            <person name="Lasko P."/>
            <person name="Lei Y."/>
            <person name="Levitsky A.A."/>
            <person name="Li J.H."/>
            <person name="Li Z."/>
            <person name="Liang Y."/>
            <person name="Lin X."/>
            <person name="Liu X."/>
            <person name="Mattei B."/>
            <person name="McIntosh T.C."/>
            <person name="McLeod M.P."/>
            <person name="McPherson D."/>
            <person name="Merkulov G."/>
            <person name="Milshina N.V."/>
            <person name="Mobarry C."/>
            <person name="Morris J."/>
            <person name="Moshrefi A."/>
            <person name="Mount S.M."/>
            <person name="Moy M."/>
            <person name="Murphy B."/>
            <person name="Murphy L."/>
            <person name="Muzny D.M."/>
            <person name="Nelson D.L."/>
            <person name="Nelson D.R."/>
            <person name="Nelson K.A."/>
            <person name="Nixon K."/>
            <person name="Nusskern D.R."/>
            <person name="Pacleb J.M."/>
            <person name="Palazzolo M."/>
            <person name="Pittman G.S."/>
            <person name="Pan S."/>
            <person name="Pollard J."/>
            <person name="Puri V."/>
            <person name="Reese M.G."/>
            <person name="Reinert K."/>
            <person name="Remington K."/>
            <person name="Saunders R.D.C."/>
            <person name="Scheeler F."/>
            <person name="Shen H."/>
            <person name="Shue B.C."/>
            <person name="Siden-Kiamos I."/>
            <person name="Simpson M."/>
            <person name="Skupski M.P."/>
            <person name="Smith T.J."/>
            <person name="Spier E."/>
            <person name="Spradling A.C."/>
            <person name="Stapleton M."/>
            <person name="Strong R."/>
            <person name="Sun E."/>
            <person name="Svirskas R."/>
            <person name="Tector C."/>
            <person name="Turner R."/>
            <person name="Venter E."/>
            <person name="Wang A.H."/>
            <person name="Wang X."/>
            <person name="Wang Z.-Y."/>
            <person name="Wassarman D.A."/>
            <person name="Weinstock G.M."/>
            <person name="Weissenbach J."/>
            <person name="Williams S.M."/>
            <person name="Woodage T."/>
            <person name="Worley K.C."/>
            <person name="Wu D."/>
            <person name="Yang S."/>
            <person name="Yao Q.A."/>
            <person name="Ye J."/>
            <person name="Yeh R.-F."/>
            <person name="Zaveri J.S."/>
            <person name="Zhan M."/>
            <person name="Zhang G."/>
            <person name="Zhao Q."/>
            <person name="Zheng L."/>
            <person name="Zheng X.H."/>
            <person name="Zhong F.N."/>
            <person name="Zhong W."/>
            <person name="Zhou X."/>
            <person name="Zhu S.C."/>
            <person name="Zhu X."/>
            <person name="Smith H.O."/>
            <person name="Gibbs R.A."/>
            <person name="Myers E.W."/>
            <person name="Rubin G.M."/>
            <person name="Venter J.C."/>
        </authorList>
    </citation>
    <scope>NUCLEOTIDE SEQUENCE [LARGE SCALE GENOMIC DNA]</scope>
    <source>
        <strain>Berkeley</strain>
    </source>
</reference>
<reference key="2">
    <citation type="journal article" date="2002" name="Genome Biol.">
        <title>Annotation of the Drosophila melanogaster euchromatic genome: a systematic review.</title>
        <authorList>
            <person name="Misra S."/>
            <person name="Crosby M.A."/>
            <person name="Mungall C.J."/>
            <person name="Matthews B.B."/>
            <person name="Campbell K.S."/>
            <person name="Hradecky P."/>
            <person name="Huang Y."/>
            <person name="Kaminker J.S."/>
            <person name="Millburn G.H."/>
            <person name="Prochnik S.E."/>
            <person name="Smith C.D."/>
            <person name="Tupy J.L."/>
            <person name="Whitfield E.J."/>
            <person name="Bayraktaroglu L."/>
            <person name="Berman B.P."/>
            <person name="Bettencourt B.R."/>
            <person name="Celniker S.E."/>
            <person name="de Grey A.D.N.J."/>
            <person name="Drysdale R.A."/>
            <person name="Harris N.L."/>
            <person name="Richter J."/>
            <person name="Russo S."/>
            <person name="Schroeder A.J."/>
            <person name="Shu S.Q."/>
            <person name="Stapleton M."/>
            <person name="Yamada C."/>
            <person name="Ashburner M."/>
            <person name="Gelbart W.M."/>
            <person name="Rubin G.M."/>
            <person name="Lewis S.E."/>
        </authorList>
    </citation>
    <scope>GENOME REANNOTATION</scope>
    <source>
        <strain>Berkeley</strain>
    </source>
</reference>
<reference key="3">
    <citation type="journal article" date="2002" name="Genome Biol.">
        <title>A Drosophila full-length cDNA resource.</title>
        <authorList>
            <person name="Stapleton M."/>
            <person name="Carlson J.W."/>
            <person name="Brokstein P."/>
            <person name="Yu C."/>
            <person name="Champe M."/>
            <person name="George R.A."/>
            <person name="Guarin H."/>
            <person name="Kronmiller B."/>
            <person name="Pacleb J.M."/>
            <person name="Park S."/>
            <person name="Wan K.H."/>
            <person name="Rubin G.M."/>
            <person name="Celniker S.E."/>
        </authorList>
    </citation>
    <scope>NUCLEOTIDE SEQUENCE [LARGE SCALE MRNA]</scope>
    <source>
        <strain>Berkeley</strain>
        <tissue>Embryo</tissue>
    </source>
</reference>
<organism>
    <name type="scientific">Drosophila melanogaster</name>
    <name type="common">Fruit fly</name>
    <dbReference type="NCBI Taxonomy" id="7227"/>
    <lineage>
        <taxon>Eukaryota</taxon>
        <taxon>Metazoa</taxon>
        <taxon>Ecdysozoa</taxon>
        <taxon>Arthropoda</taxon>
        <taxon>Hexapoda</taxon>
        <taxon>Insecta</taxon>
        <taxon>Pterygota</taxon>
        <taxon>Neoptera</taxon>
        <taxon>Endopterygota</taxon>
        <taxon>Diptera</taxon>
        <taxon>Brachycera</taxon>
        <taxon>Muscomorpha</taxon>
        <taxon>Ephydroidea</taxon>
        <taxon>Drosophilidae</taxon>
        <taxon>Drosophila</taxon>
        <taxon>Sophophora</taxon>
    </lineage>
</organism>
<protein>
    <recommendedName>
        <fullName>Probable cytochrome P450 310a1</fullName>
        <ecNumber>1.14.-.-</ecNumber>
    </recommendedName>
    <alternativeName>
        <fullName>CYPCCCXA1</fullName>
    </alternativeName>
</protein>
<feature type="chain" id="PRO_0000052320" description="Probable cytochrome P450 310a1">
    <location>
        <begin position="1"/>
        <end position="492"/>
    </location>
</feature>
<feature type="binding site" description="axial binding residue" evidence="1">
    <location>
        <position position="428"/>
    </location>
    <ligand>
        <name>heme</name>
        <dbReference type="ChEBI" id="CHEBI:30413"/>
    </ligand>
    <ligandPart>
        <name>Fe</name>
        <dbReference type="ChEBI" id="CHEBI:18248"/>
    </ligandPart>
</feature>
<sequence>MWLLLPILLYSAVFLSVRHIYSHWRRRGFPSEKAGITWSFLQKAYRREFRHVEAICEAYQSGKDRLLGIYCFFRPVLLVRNVELAQTILQQSNGHFSELKWDYISGYRRFNLLEKLAPMFGTKRLSEMFGQVQKVGDHLIHHLLDRQGQGCPQEVDIQQKLRVYSVNIIANLIYGLDINNFEHEDHILTSYLSHSQASIQSFTLGRLPQKSSYTYRLRDLIKQSVELREDHGLIRKDILQLLVRFRNGNEVSGDKWQLEPINDADKLLSIKRLAKVAEDLLKVSLDAVASTVTFTLLEILQEPLIVEKLRAEIKELSNENGQLKFEELNGLRYMDMCLKETLRKYPPLPIIERVCRKSYSLPNSKFTIDEGKTLMVPLLAMHRDEKYFSEPMKYKPLRFLQTANDVGQCEDKTKSNVFIGFGIGGSQCVGQNFAKLVIKVALIKLLQNFHLELDANQVKTLKVSHRPAPFIHTKDGLKVKLKRREINTKFYS</sequence>
<comment type="function">
    <text evidence="1">May be involved in the metabolism of insect hormones and in the breakdown of synthetic insecticides.</text>
</comment>
<comment type="cofactor">
    <cofactor evidence="1">
        <name>heme</name>
        <dbReference type="ChEBI" id="CHEBI:30413"/>
    </cofactor>
</comment>
<comment type="subcellular location">
    <subcellularLocation>
        <location evidence="2">Endoplasmic reticulum membrane</location>
        <topology evidence="2">Peripheral membrane protein</topology>
    </subcellularLocation>
    <subcellularLocation>
        <location evidence="2">Microsome membrane</location>
        <topology evidence="2">Peripheral membrane protein</topology>
    </subcellularLocation>
</comment>
<comment type="similarity">
    <text evidence="2">Belongs to the cytochrome P450 family.</text>
</comment>